<name>FOLD_NATTJ</name>
<organism>
    <name type="scientific">Natranaerobius thermophilus (strain ATCC BAA-1301 / DSM 18059 / JW/NM-WN-LF)</name>
    <dbReference type="NCBI Taxonomy" id="457570"/>
    <lineage>
        <taxon>Bacteria</taxon>
        <taxon>Bacillati</taxon>
        <taxon>Bacillota</taxon>
        <taxon>Clostridia</taxon>
        <taxon>Natranaerobiales</taxon>
        <taxon>Natranaerobiaceae</taxon>
        <taxon>Natranaerobius</taxon>
    </lineage>
</organism>
<protein>
    <recommendedName>
        <fullName evidence="1">Bifunctional protein FolD</fullName>
    </recommendedName>
    <domain>
        <recommendedName>
            <fullName evidence="1">Methylenetetrahydrofolate dehydrogenase</fullName>
            <ecNumber evidence="1">1.5.1.5</ecNumber>
        </recommendedName>
    </domain>
    <domain>
        <recommendedName>
            <fullName evidence="1">Methenyltetrahydrofolate cyclohydrolase</fullName>
            <ecNumber evidence="1">3.5.4.9</ecNumber>
        </recommendedName>
    </domain>
</protein>
<feature type="chain" id="PRO_1000196796" description="Bifunctional protein FolD">
    <location>
        <begin position="1"/>
        <end position="284"/>
    </location>
</feature>
<feature type="binding site" evidence="1">
    <location>
        <begin position="165"/>
        <end position="167"/>
    </location>
    <ligand>
        <name>NADP(+)</name>
        <dbReference type="ChEBI" id="CHEBI:58349"/>
    </ligand>
</feature>
<feature type="binding site" evidence="1">
    <location>
        <position position="190"/>
    </location>
    <ligand>
        <name>NADP(+)</name>
        <dbReference type="ChEBI" id="CHEBI:58349"/>
    </ligand>
</feature>
<feature type="binding site" evidence="1">
    <location>
        <position position="231"/>
    </location>
    <ligand>
        <name>NADP(+)</name>
        <dbReference type="ChEBI" id="CHEBI:58349"/>
    </ligand>
</feature>
<proteinExistence type="inferred from homology"/>
<reference key="1">
    <citation type="submission" date="2008-04" db="EMBL/GenBank/DDBJ databases">
        <title>Complete sequence of chromosome of Natranaerobius thermophilus JW/NM-WN-LF.</title>
        <authorList>
            <consortium name="US DOE Joint Genome Institute"/>
            <person name="Copeland A."/>
            <person name="Lucas S."/>
            <person name="Lapidus A."/>
            <person name="Glavina del Rio T."/>
            <person name="Dalin E."/>
            <person name="Tice H."/>
            <person name="Bruce D."/>
            <person name="Goodwin L."/>
            <person name="Pitluck S."/>
            <person name="Chertkov O."/>
            <person name="Brettin T."/>
            <person name="Detter J.C."/>
            <person name="Han C."/>
            <person name="Kuske C.R."/>
            <person name="Schmutz J."/>
            <person name="Larimer F."/>
            <person name="Land M."/>
            <person name="Hauser L."/>
            <person name="Kyrpides N."/>
            <person name="Lykidis A."/>
            <person name="Mesbah N.M."/>
            <person name="Wiegel J."/>
        </authorList>
    </citation>
    <scope>NUCLEOTIDE SEQUENCE [LARGE SCALE GENOMIC DNA]</scope>
    <source>
        <strain>ATCC BAA-1301 / DSM 18059 / JW/NM-WN-LF</strain>
    </source>
</reference>
<dbReference type="EC" id="1.5.1.5" evidence="1"/>
<dbReference type="EC" id="3.5.4.9" evidence="1"/>
<dbReference type="EMBL" id="CP001034">
    <property type="protein sequence ID" value="ACB85274.1"/>
    <property type="molecule type" value="Genomic_DNA"/>
</dbReference>
<dbReference type="RefSeq" id="WP_012448142.1">
    <property type="nucleotide sequence ID" value="NC_010718.1"/>
</dbReference>
<dbReference type="SMR" id="B2A532"/>
<dbReference type="FunCoup" id="B2A532">
    <property type="interactions" value="342"/>
</dbReference>
<dbReference type="STRING" id="457570.Nther_1700"/>
<dbReference type="KEGG" id="nth:Nther_1700"/>
<dbReference type="eggNOG" id="COG0190">
    <property type="taxonomic scope" value="Bacteria"/>
</dbReference>
<dbReference type="HOGENOM" id="CLU_034045_2_1_9"/>
<dbReference type="InParanoid" id="B2A532"/>
<dbReference type="OrthoDB" id="9803580at2"/>
<dbReference type="UniPathway" id="UPA00193"/>
<dbReference type="Proteomes" id="UP000001683">
    <property type="component" value="Chromosome"/>
</dbReference>
<dbReference type="GO" id="GO:0005829">
    <property type="term" value="C:cytosol"/>
    <property type="evidence" value="ECO:0007669"/>
    <property type="project" value="TreeGrafter"/>
</dbReference>
<dbReference type="GO" id="GO:0004477">
    <property type="term" value="F:methenyltetrahydrofolate cyclohydrolase activity"/>
    <property type="evidence" value="ECO:0007669"/>
    <property type="project" value="UniProtKB-UniRule"/>
</dbReference>
<dbReference type="GO" id="GO:0004488">
    <property type="term" value="F:methylenetetrahydrofolate dehydrogenase (NADP+) activity"/>
    <property type="evidence" value="ECO:0007669"/>
    <property type="project" value="UniProtKB-UniRule"/>
</dbReference>
<dbReference type="GO" id="GO:0000105">
    <property type="term" value="P:L-histidine biosynthetic process"/>
    <property type="evidence" value="ECO:0007669"/>
    <property type="project" value="UniProtKB-KW"/>
</dbReference>
<dbReference type="GO" id="GO:0009086">
    <property type="term" value="P:methionine biosynthetic process"/>
    <property type="evidence" value="ECO:0007669"/>
    <property type="project" value="UniProtKB-KW"/>
</dbReference>
<dbReference type="GO" id="GO:0006164">
    <property type="term" value="P:purine nucleotide biosynthetic process"/>
    <property type="evidence" value="ECO:0007669"/>
    <property type="project" value="UniProtKB-KW"/>
</dbReference>
<dbReference type="GO" id="GO:0035999">
    <property type="term" value="P:tetrahydrofolate interconversion"/>
    <property type="evidence" value="ECO:0007669"/>
    <property type="project" value="UniProtKB-UniRule"/>
</dbReference>
<dbReference type="CDD" id="cd01080">
    <property type="entry name" value="NAD_bind_m-THF_DH_Cyclohyd"/>
    <property type="match status" value="1"/>
</dbReference>
<dbReference type="FunFam" id="3.40.50.10860:FF:000001">
    <property type="entry name" value="Bifunctional protein FolD"/>
    <property type="match status" value="1"/>
</dbReference>
<dbReference type="FunFam" id="3.40.50.720:FF:000094">
    <property type="entry name" value="Bifunctional protein FolD"/>
    <property type="match status" value="1"/>
</dbReference>
<dbReference type="Gene3D" id="3.40.50.10860">
    <property type="entry name" value="Leucine Dehydrogenase, chain A, domain 1"/>
    <property type="match status" value="1"/>
</dbReference>
<dbReference type="Gene3D" id="3.40.50.720">
    <property type="entry name" value="NAD(P)-binding Rossmann-like Domain"/>
    <property type="match status" value="1"/>
</dbReference>
<dbReference type="HAMAP" id="MF_01576">
    <property type="entry name" value="THF_DHG_CYH"/>
    <property type="match status" value="1"/>
</dbReference>
<dbReference type="InterPro" id="IPR046346">
    <property type="entry name" value="Aminoacid_DH-like_N_sf"/>
</dbReference>
<dbReference type="InterPro" id="IPR036291">
    <property type="entry name" value="NAD(P)-bd_dom_sf"/>
</dbReference>
<dbReference type="InterPro" id="IPR000672">
    <property type="entry name" value="THF_DH/CycHdrlase"/>
</dbReference>
<dbReference type="InterPro" id="IPR020630">
    <property type="entry name" value="THF_DH/CycHdrlase_cat_dom"/>
</dbReference>
<dbReference type="InterPro" id="IPR020867">
    <property type="entry name" value="THF_DH/CycHdrlase_CS"/>
</dbReference>
<dbReference type="InterPro" id="IPR020631">
    <property type="entry name" value="THF_DH/CycHdrlase_NAD-bd_dom"/>
</dbReference>
<dbReference type="NCBIfam" id="NF008058">
    <property type="entry name" value="PRK10792.1"/>
    <property type="match status" value="1"/>
</dbReference>
<dbReference type="NCBIfam" id="NF010783">
    <property type="entry name" value="PRK14186.1"/>
    <property type="match status" value="1"/>
</dbReference>
<dbReference type="PANTHER" id="PTHR48099:SF5">
    <property type="entry name" value="C-1-TETRAHYDROFOLATE SYNTHASE, CYTOPLASMIC"/>
    <property type="match status" value="1"/>
</dbReference>
<dbReference type="PANTHER" id="PTHR48099">
    <property type="entry name" value="C-1-TETRAHYDROFOLATE SYNTHASE, CYTOPLASMIC-RELATED"/>
    <property type="match status" value="1"/>
</dbReference>
<dbReference type="Pfam" id="PF00763">
    <property type="entry name" value="THF_DHG_CYH"/>
    <property type="match status" value="1"/>
</dbReference>
<dbReference type="Pfam" id="PF02882">
    <property type="entry name" value="THF_DHG_CYH_C"/>
    <property type="match status" value="1"/>
</dbReference>
<dbReference type="PRINTS" id="PR00085">
    <property type="entry name" value="THFDHDRGNASE"/>
</dbReference>
<dbReference type="SUPFAM" id="SSF53223">
    <property type="entry name" value="Aminoacid dehydrogenase-like, N-terminal domain"/>
    <property type="match status" value="1"/>
</dbReference>
<dbReference type="SUPFAM" id="SSF51735">
    <property type="entry name" value="NAD(P)-binding Rossmann-fold domains"/>
    <property type="match status" value="1"/>
</dbReference>
<dbReference type="PROSITE" id="PS00766">
    <property type="entry name" value="THF_DHG_CYH_1"/>
    <property type="match status" value="1"/>
</dbReference>
<dbReference type="PROSITE" id="PS00767">
    <property type="entry name" value="THF_DHG_CYH_2"/>
    <property type="match status" value="1"/>
</dbReference>
<gene>
    <name evidence="1" type="primary">folD</name>
    <name type="ordered locus">Nther_1700</name>
</gene>
<comment type="function">
    <text evidence="1">Catalyzes the oxidation of 5,10-methylenetetrahydrofolate to 5,10-methenyltetrahydrofolate and then the hydrolysis of 5,10-methenyltetrahydrofolate to 10-formyltetrahydrofolate.</text>
</comment>
<comment type="catalytic activity">
    <reaction evidence="1">
        <text>(6R)-5,10-methylene-5,6,7,8-tetrahydrofolate + NADP(+) = (6R)-5,10-methenyltetrahydrofolate + NADPH</text>
        <dbReference type="Rhea" id="RHEA:22812"/>
        <dbReference type="ChEBI" id="CHEBI:15636"/>
        <dbReference type="ChEBI" id="CHEBI:57455"/>
        <dbReference type="ChEBI" id="CHEBI:57783"/>
        <dbReference type="ChEBI" id="CHEBI:58349"/>
        <dbReference type="EC" id="1.5.1.5"/>
    </reaction>
</comment>
<comment type="catalytic activity">
    <reaction evidence="1">
        <text>(6R)-5,10-methenyltetrahydrofolate + H2O = (6R)-10-formyltetrahydrofolate + H(+)</text>
        <dbReference type="Rhea" id="RHEA:23700"/>
        <dbReference type="ChEBI" id="CHEBI:15377"/>
        <dbReference type="ChEBI" id="CHEBI:15378"/>
        <dbReference type="ChEBI" id="CHEBI:57455"/>
        <dbReference type="ChEBI" id="CHEBI:195366"/>
        <dbReference type="EC" id="3.5.4.9"/>
    </reaction>
</comment>
<comment type="pathway">
    <text evidence="1">One-carbon metabolism; tetrahydrofolate interconversion.</text>
</comment>
<comment type="subunit">
    <text evidence="1">Homodimer.</text>
</comment>
<comment type="similarity">
    <text evidence="1">Belongs to the tetrahydrofolate dehydrogenase/cyclohydrolase family.</text>
</comment>
<evidence type="ECO:0000255" key="1">
    <source>
        <dbReference type="HAMAP-Rule" id="MF_01576"/>
    </source>
</evidence>
<accession>B2A532</accession>
<keyword id="KW-0028">Amino-acid biosynthesis</keyword>
<keyword id="KW-0368">Histidine biosynthesis</keyword>
<keyword id="KW-0378">Hydrolase</keyword>
<keyword id="KW-0486">Methionine biosynthesis</keyword>
<keyword id="KW-0511">Multifunctional enzyme</keyword>
<keyword id="KW-0521">NADP</keyword>
<keyword id="KW-0554">One-carbon metabolism</keyword>
<keyword id="KW-0560">Oxidoreductase</keyword>
<keyword id="KW-0658">Purine biosynthesis</keyword>
<keyword id="KW-1185">Reference proteome</keyword>
<sequence length="284" mass="30885">MSASLIKGSDVAKEIRSDLQKDVEDLKSQGVTPHLAVVLVGEDSASQTYVNMKEKTAGKVGIESTVKRLPTNVEEDELLRLIDELNKDDSVHGILVQLPLPYHIDEYKILNAIDQYKDVDSFHPVNVGNLTIGQKRFTPCTPAGIMKLLDSIDYDLNGKHAVVLGRSNIVGKPISLLLLERNATVSICHSRTKDLTEMTKSADLLIVAVGRPEIVTGKMIKPGAVVIDVGVNKVDDKLIGDVEFESAKEVAGWITPVPGGVGPMTITMLLNNTIEAARRCLNEQ</sequence>